<comment type="function">
    <text evidence="1 2">Component of the viral envelope that plays a central role in virus morphogenesis and assembly via its interactions with other viral proteins.</text>
</comment>
<comment type="subunit">
    <text evidence="1 2">Homomultimer. Interacts with envelope E protein in the budding compartment of the host cell, which is located between endoplasmic reticulum and the Golgi complex. Forms a complex with HE and S proteins. Interacts with nucleocapsid N protein. This interaction probably participates in RNA packaging into the virus.</text>
</comment>
<comment type="subcellular location">
    <subcellularLocation>
        <location evidence="1">Virion membrane</location>
        <topology evidence="1">Multi-pass membrane protein</topology>
    </subcellularLocation>
    <subcellularLocation>
        <location evidence="1">Host Golgi apparatus membrane</location>
        <topology evidence="1">Multi-pass membrane protein</topology>
    </subcellularLocation>
    <text evidence="1">Largely embedded in the lipid bilayer.</text>
</comment>
<comment type="similarity">
    <text evidence="1">Belongs to the betacoronaviruses M protein family.</text>
</comment>
<reference key="1">
    <citation type="journal article" date="2007" name="J. Virol.">
        <title>Comparative analysis of twelve genomes of three novel group 2c and group 2d coronaviruses reveals unique group and subgroup features.</title>
        <authorList>
            <person name="Woo P.C.Y."/>
            <person name="Wang M."/>
            <person name="Lau S.K.P."/>
            <person name="Xu H.F."/>
            <person name="Poon R.W.S."/>
            <person name="Guo R."/>
            <person name="Wong B.H.L."/>
            <person name="Gao K."/>
            <person name="Tsoi H.-W."/>
            <person name="Huang Y."/>
            <person name="Li K.S.M."/>
            <person name="Lam C.S.F."/>
            <person name="Chan K.-H."/>
            <person name="Zheng B.-J."/>
            <person name="Yuen K.-Y."/>
        </authorList>
    </citation>
    <scope>NUCLEOTIDE SEQUENCE [GENOMIC RNA]</scope>
    <source>
        <strain>Isolate HKU9-1</strain>
    </source>
</reference>
<dbReference type="EMBL" id="EF065513">
    <property type="protein sequence ID" value="ABN10914.1"/>
    <property type="molecule type" value="Genomic_RNA"/>
</dbReference>
<dbReference type="RefSeq" id="YP_001039974.1">
    <property type="nucleotide sequence ID" value="NC_009021.1"/>
</dbReference>
<dbReference type="SMR" id="A3EXG9"/>
<dbReference type="GeneID" id="4836016"/>
<dbReference type="KEGG" id="vg:4836016"/>
<dbReference type="OrthoDB" id="8130at10239"/>
<dbReference type="Proteomes" id="UP000006576">
    <property type="component" value="Genome"/>
</dbReference>
<dbReference type="GO" id="GO:0044178">
    <property type="term" value="C:host cell Golgi membrane"/>
    <property type="evidence" value="ECO:0007669"/>
    <property type="project" value="UniProtKB-SubCell"/>
</dbReference>
<dbReference type="GO" id="GO:0016020">
    <property type="term" value="C:membrane"/>
    <property type="evidence" value="ECO:0007669"/>
    <property type="project" value="UniProtKB-UniRule"/>
</dbReference>
<dbReference type="GO" id="GO:0019031">
    <property type="term" value="C:viral envelope"/>
    <property type="evidence" value="ECO:0007669"/>
    <property type="project" value="UniProtKB-UniRule"/>
</dbReference>
<dbReference type="GO" id="GO:0055036">
    <property type="term" value="C:virion membrane"/>
    <property type="evidence" value="ECO:0007669"/>
    <property type="project" value="UniProtKB-SubCell"/>
</dbReference>
<dbReference type="GO" id="GO:0039660">
    <property type="term" value="F:structural constituent of virion"/>
    <property type="evidence" value="ECO:0007669"/>
    <property type="project" value="UniProtKB-UniRule"/>
</dbReference>
<dbReference type="CDD" id="cd21570">
    <property type="entry name" value="batCoV_HKU9-like_M"/>
    <property type="match status" value="1"/>
</dbReference>
<dbReference type="HAMAP" id="MF_04202">
    <property type="entry name" value="BETA_CORONA_M"/>
    <property type="match status" value="1"/>
</dbReference>
<dbReference type="InterPro" id="IPR044360">
    <property type="entry name" value="M_batCoV_HKU9-like"/>
</dbReference>
<dbReference type="InterPro" id="IPR002574">
    <property type="entry name" value="M_CoV"/>
</dbReference>
<dbReference type="Pfam" id="PF01635">
    <property type="entry name" value="CoV_M"/>
    <property type="match status" value="1"/>
</dbReference>
<dbReference type="PROSITE" id="PS51927">
    <property type="entry name" value="COV_M"/>
    <property type="match status" value="1"/>
</dbReference>
<gene>
    <name evidence="1" type="primary">M</name>
    <name type="ORF">5</name>
</gene>
<organismHost>
    <name type="scientific">Rousettus leschenaultii</name>
    <name type="common">Leschenault's rousette</name>
    <name type="synonym">Pteropus leschenaultii</name>
    <dbReference type="NCBI Taxonomy" id="9408"/>
</organismHost>
<sequence>MSNNCTNTVPRPEVIAALKDWNFAVSVILLFITVLLQWGYPSRCKPIWVIKMFILWLLWPLSIAAAVFAAIHPINSVAFGFAIAFACISGIMWLSYFISSFRLLCRTGSAWSFMPETDMLINIPLLGRTVTRPIISDSPAVQFLIIRGELRFDGFTLGRCDPGDMPDIVTIARPNALHWYKRALTRNMYTRSAILVYIKYKVGNHRVQNTTEDGDRLAMFVA</sequence>
<protein>
    <recommendedName>
        <fullName evidence="1">Membrane protein</fullName>
        <shortName evidence="1">M protein</shortName>
    </recommendedName>
    <alternativeName>
        <fullName evidence="1">E1 glycoprotein</fullName>
    </alternativeName>
    <alternativeName>
        <fullName evidence="1">Matrix glycoprotein</fullName>
    </alternativeName>
    <alternativeName>
        <fullName evidence="1">Membrane glycoprotein</fullName>
    </alternativeName>
</protein>
<accession>A3EXG9</accession>
<feature type="chain" id="PRO_0000291373" description="Membrane protein">
    <location>
        <begin position="1"/>
        <end position="222"/>
    </location>
</feature>
<feature type="topological domain" description="Virion surface" evidence="1">
    <location>
        <begin position="1"/>
        <end position="20"/>
    </location>
</feature>
<feature type="transmembrane region" description="Helical" evidence="1">
    <location>
        <begin position="21"/>
        <end position="41"/>
    </location>
</feature>
<feature type="topological domain" description="Intravirion" evidence="1">
    <location>
        <begin position="42"/>
        <end position="51"/>
    </location>
</feature>
<feature type="transmembrane region" description="Helical" evidence="1">
    <location>
        <begin position="52"/>
        <end position="72"/>
    </location>
</feature>
<feature type="topological domain" description="Virion surface" evidence="1">
    <location>
        <begin position="73"/>
        <end position="80"/>
    </location>
</feature>
<feature type="transmembrane region" description="Helical" evidence="1">
    <location>
        <begin position="81"/>
        <end position="101"/>
    </location>
</feature>
<feature type="topological domain" description="Intravirion" evidence="1">
    <location>
        <begin position="102"/>
        <end position="222"/>
    </location>
</feature>
<organism>
    <name type="scientific">Bat coronavirus HKU9</name>
    <name type="common">BtCoV</name>
    <name type="synonym">BtCoV/HKU9</name>
    <dbReference type="NCBI Taxonomy" id="694006"/>
    <lineage>
        <taxon>Viruses</taxon>
        <taxon>Riboviria</taxon>
        <taxon>Orthornavirae</taxon>
        <taxon>Pisuviricota</taxon>
        <taxon>Pisoniviricetes</taxon>
        <taxon>Nidovirales</taxon>
        <taxon>Cornidovirineae</taxon>
        <taxon>Coronaviridae</taxon>
        <taxon>Orthocoronavirinae</taxon>
        <taxon>Betacoronavirus</taxon>
        <taxon>Nobecovirus</taxon>
    </lineage>
</organism>
<proteinExistence type="inferred from homology"/>
<evidence type="ECO:0000255" key="1">
    <source>
        <dbReference type="HAMAP-Rule" id="MF_04202"/>
    </source>
</evidence>
<evidence type="ECO:0000255" key="2">
    <source>
        <dbReference type="PROSITE-ProRule" id="PRU01275"/>
    </source>
</evidence>
<keyword id="KW-0325">Glycoprotein</keyword>
<keyword id="KW-1040">Host Golgi apparatus</keyword>
<keyword id="KW-1043">Host membrane</keyword>
<keyword id="KW-0945">Host-virus interaction</keyword>
<keyword id="KW-0472">Membrane</keyword>
<keyword id="KW-1185">Reference proteome</keyword>
<keyword id="KW-0812">Transmembrane</keyword>
<keyword id="KW-1133">Transmembrane helix</keyword>
<keyword id="KW-0261">Viral envelope protein</keyword>
<keyword id="KW-0899">Viral immunoevasion</keyword>
<keyword id="KW-0468">Viral matrix protein</keyword>
<keyword id="KW-0946">Virion</keyword>
<name>VME1_BCHK9</name>